<proteinExistence type="inferred from homology"/>
<protein>
    <recommendedName>
        <fullName evidence="1">3-methyl-2-oxobutanoate hydroxymethyltransferase</fullName>
        <ecNumber evidence="1">2.1.2.11</ecNumber>
    </recommendedName>
    <alternativeName>
        <fullName evidence="1">Ketopantoate hydroxymethyltransferase</fullName>
        <shortName evidence="1">KPHMT</shortName>
    </alternativeName>
</protein>
<gene>
    <name evidence="1" type="primary">panB</name>
    <name type="ordered locus">Pfl01_4811</name>
</gene>
<feature type="chain" id="PRO_0000297339" description="3-methyl-2-oxobutanoate hydroxymethyltransferase">
    <location>
        <begin position="1"/>
        <end position="266"/>
    </location>
</feature>
<feature type="active site" description="Proton acceptor" evidence="1">
    <location>
        <position position="181"/>
    </location>
</feature>
<feature type="binding site" evidence="1">
    <location>
        <begin position="45"/>
        <end position="46"/>
    </location>
    <ligand>
        <name>3-methyl-2-oxobutanoate</name>
        <dbReference type="ChEBI" id="CHEBI:11851"/>
    </ligand>
</feature>
<feature type="binding site" evidence="1">
    <location>
        <position position="45"/>
    </location>
    <ligand>
        <name>Mg(2+)</name>
        <dbReference type="ChEBI" id="CHEBI:18420"/>
    </ligand>
</feature>
<feature type="binding site" evidence="1">
    <location>
        <position position="84"/>
    </location>
    <ligand>
        <name>3-methyl-2-oxobutanoate</name>
        <dbReference type="ChEBI" id="CHEBI:11851"/>
    </ligand>
</feature>
<feature type="binding site" evidence="1">
    <location>
        <position position="84"/>
    </location>
    <ligand>
        <name>Mg(2+)</name>
        <dbReference type="ChEBI" id="CHEBI:18420"/>
    </ligand>
</feature>
<feature type="binding site" evidence="1">
    <location>
        <position position="112"/>
    </location>
    <ligand>
        <name>3-methyl-2-oxobutanoate</name>
        <dbReference type="ChEBI" id="CHEBI:11851"/>
    </ligand>
</feature>
<feature type="binding site" evidence="1">
    <location>
        <position position="114"/>
    </location>
    <ligand>
        <name>Mg(2+)</name>
        <dbReference type="ChEBI" id="CHEBI:18420"/>
    </ligand>
</feature>
<name>PANB_PSEPF</name>
<dbReference type="EC" id="2.1.2.11" evidence="1"/>
<dbReference type="EMBL" id="CP000094">
    <property type="protein sequence ID" value="ABA76548.1"/>
    <property type="molecule type" value="Genomic_DNA"/>
</dbReference>
<dbReference type="RefSeq" id="WP_011335970.1">
    <property type="nucleotide sequence ID" value="NC_007492.2"/>
</dbReference>
<dbReference type="SMR" id="Q3K6Q6"/>
<dbReference type="KEGG" id="pfo:Pfl01_4811"/>
<dbReference type="eggNOG" id="COG0413">
    <property type="taxonomic scope" value="Bacteria"/>
</dbReference>
<dbReference type="HOGENOM" id="CLU_036645_1_0_6"/>
<dbReference type="UniPathway" id="UPA00028">
    <property type="reaction ID" value="UER00003"/>
</dbReference>
<dbReference type="Proteomes" id="UP000002704">
    <property type="component" value="Chromosome"/>
</dbReference>
<dbReference type="GO" id="GO:0005737">
    <property type="term" value="C:cytoplasm"/>
    <property type="evidence" value="ECO:0007669"/>
    <property type="project" value="UniProtKB-SubCell"/>
</dbReference>
<dbReference type="GO" id="GO:0003864">
    <property type="term" value="F:3-methyl-2-oxobutanoate hydroxymethyltransferase activity"/>
    <property type="evidence" value="ECO:0007669"/>
    <property type="project" value="UniProtKB-UniRule"/>
</dbReference>
<dbReference type="GO" id="GO:0000287">
    <property type="term" value="F:magnesium ion binding"/>
    <property type="evidence" value="ECO:0007669"/>
    <property type="project" value="TreeGrafter"/>
</dbReference>
<dbReference type="GO" id="GO:0015940">
    <property type="term" value="P:pantothenate biosynthetic process"/>
    <property type="evidence" value="ECO:0007669"/>
    <property type="project" value="UniProtKB-UniRule"/>
</dbReference>
<dbReference type="CDD" id="cd06557">
    <property type="entry name" value="KPHMT-like"/>
    <property type="match status" value="1"/>
</dbReference>
<dbReference type="FunFam" id="3.20.20.60:FF:000003">
    <property type="entry name" value="3-methyl-2-oxobutanoate hydroxymethyltransferase"/>
    <property type="match status" value="1"/>
</dbReference>
<dbReference type="Gene3D" id="3.20.20.60">
    <property type="entry name" value="Phosphoenolpyruvate-binding domains"/>
    <property type="match status" value="1"/>
</dbReference>
<dbReference type="HAMAP" id="MF_00156">
    <property type="entry name" value="PanB"/>
    <property type="match status" value="1"/>
</dbReference>
<dbReference type="InterPro" id="IPR003700">
    <property type="entry name" value="Pantoate_hydroxy_MeTrfase"/>
</dbReference>
<dbReference type="InterPro" id="IPR015813">
    <property type="entry name" value="Pyrv/PenolPyrv_kinase-like_dom"/>
</dbReference>
<dbReference type="InterPro" id="IPR040442">
    <property type="entry name" value="Pyrv_kinase-like_dom_sf"/>
</dbReference>
<dbReference type="NCBIfam" id="TIGR00222">
    <property type="entry name" value="panB"/>
    <property type="match status" value="1"/>
</dbReference>
<dbReference type="NCBIfam" id="NF001452">
    <property type="entry name" value="PRK00311.1"/>
    <property type="match status" value="1"/>
</dbReference>
<dbReference type="PANTHER" id="PTHR20881">
    <property type="entry name" value="3-METHYL-2-OXOBUTANOATE HYDROXYMETHYLTRANSFERASE"/>
    <property type="match status" value="1"/>
</dbReference>
<dbReference type="PANTHER" id="PTHR20881:SF0">
    <property type="entry name" value="3-METHYL-2-OXOBUTANOATE HYDROXYMETHYLTRANSFERASE"/>
    <property type="match status" value="1"/>
</dbReference>
<dbReference type="Pfam" id="PF02548">
    <property type="entry name" value="Pantoate_transf"/>
    <property type="match status" value="1"/>
</dbReference>
<dbReference type="PIRSF" id="PIRSF000388">
    <property type="entry name" value="Pantoate_hydroxy_MeTrfase"/>
    <property type="match status" value="1"/>
</dbReference>
<dbReference type="SUPFAM" id="SSF51621">
    <property type="entry name" value="Phosphoenolpyruvate/pyruvate domain"/>
    <property type="match status" value="1"/>
</dbReference>
<evidence type="ECO:0000255" key="1">
    <source>
        <dbReference type="HAMAP-Rule" id="MF_00156"/>
    </source>
</evidence>
<sequence>MPAITLTTLQSLKQKGEKITMLTCYDATFAHACNEAGVEVLLVGDSLGMVLQGHDSTLPVTTAEMAYHVASVKRGNSDALILADLPFMANATLEQTMTNSALLMQAGAHMVKVEGALWLADSIRLLAERGVPVCAHMGLTPQAVNILGGYKVQGRNENQARQMRADAISLEQAGAAMLLLECVPSELAAEITQAVKIPVIGIGAGSDTDGQVLVLHDMLGLSISGRVPKFVKNFMQGQDSIQSALKAYVSEVKATTFPGIEHGFSA</sequence>
<accession>Q3K6Q6</accession>
<comment type="function">
    <text evidence="1">Catalyzes the reversible reaction in which hydroxymethyl group from 5,10-methylenetetrahydrofolate is transferred onto alpha-ketoisovalerate to form ketopantoate.</text>
</comment>
<comment type="catalytic activity">
    <reaction evidence="1">
        <text>3-methyl-2-oxobutanoate + (6R)-5,10-methylene-5,6,7,8-tetrahydrofolate + H2O = 2-dehydropantoate + (6S)-5,6,7,8-tetrahydrofolate</text>
        <dbReference type="Rhea" id="RHEA:11824"/>
        <dbReference type="ChEBI" id="CHEBI:11561"/>
        <dbReference type="ChEBI" id="CHEBI:11851"/>
        <dbReference type="ChEBI" id="CHEBI:15377"/>
        <dbReference type="ChEBI" id="CHEBI:15636"/>
        <dbReference type="ChEBI" id="CHEBI:57453"/>
        <dbReference type="EC" id="2.1.2.11"/>
    </reaction>
</comment>
<comment type="cofactor">
    <cofactor evidence="1">
        <name>Mg(2+)</name>
        <dbReference type="ChEBI" id="CHEBI:18420"/>
    </cofactor>
    <text evidence="1">Binds 1 Mg(2+) ion per subunit.</text>
</comment>
<comment type="pathway">
    <text evidence="1">Cofactor biosynthesis; (R)-pantothenate biosynthesis; (R)-pantoate from 3-methyl-2-oxobutanoate: step 1/2.</text>
</comment>
<comment type="subunit">
    <text evidence="1">Homodecamer; pentamer of dimers.</text>
</comment>
<comment type="subcellular location">
    <subcellularLocation>
        <location evidence="1">Cytoplasm</location>
    </subcellularLocation>
</comment>
<comment type="similarity">
    <text evidence="1">Belongs to the PanB family.</text>
</comment>
<organism>
    <name type="scientific">Pseudomonas fluorescens (strain Pf0-1)</name>
    <dbReference type="NCBI Taxonomy" id="205922"/>
    <lineage>
        <taxon>Bacteria</taxon>
        <taxon>Pseudomonadati</taxon>
        <taxon>Pseudomonadota</taxon>
        <taxon>Gammaproteobacteria</taxon>
        <taxon>Pseudomonadales</taxon>
        <taxon>Pseudomonadaceae</taxon>
        <taxon>Pseudomonas</taxon>
    </lineage>
</organism>
<keyword id="KW-0963">Cytoplasm</keyword>
<keyword id="KW-0460">Magnesium</keyword>
<keyword id="KW-0479">Metal-binding</keyword>
<keyword id="KW-0566">Pantothenate biosynthesis</keyword>
<keyword id="KW-0808">Transferase</keyword>
<reference key="1">
    <citation type="journal article" date="2009" name="Genome Biol.">
        <title>Genomic and genetic analyses of diversity and plant interactions of Pseudomonas fluorescens.</title>
        <authorList>
            <person name="Silby M.W."/>
            <person name="Cerdeno-Tarraga A.M."/>
            <person name="Vernikos G.S."/>
            <person name="Giddens S.R."/>
            <person name="Jackson R.W."/>
            <person name="Preston G.M."/>
            <person name="Zhang X.-X."/>
            <person name="Moon C.D."/>
            <person name="Gehrig S.M."/>
            <person name="Godfrey S.A.C."/>
            <person name="Knight C.G."/>
            <person name="Malone J.G."/>
            <person name="Robinson Z."/>
            <person name="Spiers A.J."/>
            <person name="Harris S."/>
            <person name="Challis G.L."/>
            <person name="Yaxley A.M."/>
            <person name="Harris D."/>
            <person name="Seeger K."/>
            <person name="Murphy L."/>
            <person name="Rutter S."/>
            <person name="Squares R."/>
            <person name="Quail M.A."/>
            <person name="Saunders E."/>
            <person name="Mavromatis K."/>
            <person name="Brettin T.S."/>
            <person name="Bentley S.D."/>
            <person name="Hothersall J."/>
            <person name="Stephens E."/>
            <person name="Thomas C.M."/>
            <person name="Parkhill J."/>
            <person name="Levy S.B."/>
            <person name="Rainey P.B."/>
            <person name="Thomson N.R."/>
        </authorList>
    </citation>
    <scope>NUCLEOTIDE SEQUENCE [LARGE SCALE GENOMIC DNA]</scope>
    <source>
        <strain>Pf0-1</strain>
    </source>
</reference>